<name>MNMA_VIBVY</name>
<protein>
    <recommendedName>
        <fullName evidence="1">tRNA-specific 2-thiouridylase MnmA</fullName>
        <ecNumber evidence="1">2.8.1.13</ecNumber>
    </recommendedName>
</protein>
<feature type="chain" id="PRO_0000121701" description="tRNA-specific 2-thiouridylase MnmA">
    <location>
        <begin position="1"/>
        <end position="374"/>
    </location>
</feature>
<feature type="region of interest" description="Interaction with target base in tRNA" evidence="1">
    <location>
        <begin position="98"/>
        <end position="100"/>
    </location>
</feature>
<feature type="region of interest" description="Interaction with tRNA" evidence="1">
    <location>
        <begin position="152"/>
        <end position="154"/>
    </location>
</feature>
<feature type="region of interest" description="Interaction with tRNA" evidence="1">
    <location>
        <begin position="316"/>
        <end position="317"/>
    </location>
</feature>
<feature type="active site" description="Nucleophile" evidence="1">
    <location>
        <position position="103"/>
    </location>
</feature>
<feature type="active site" description="Cysteine persulfide intermediate" evidence="1">
    <location>
        <position position="202"/>
    </location>
</feature>
<feature type="binding site" evidence="1">
    <location>
        <begin position="12"/>
        <end position="19"/>
    </location>
    <ligand>
        <name>ATP</name>
        <dbReference type="ChEBI" id="CHEBI:30616"/>
    </ligand>
</feature>
<feature type="binding site" evidence="1">
    <location>
        <position position="38"/>
    </location>
    <ligand>
        <name>ATP</name>
        <dbReference type="ChEBI" id="CHEBI:30616"/>
    </ligand>
</feature>
<feature type="binding site" evidence="1">
    <location>
        <position position="128"/>
    </location>
    <ligand>
        <name>ATP</name>
        <dbReference type="ChEBI" id="CHEBI:30616"/>
    </ligand>
</feature>
<feature type="site" description="Interaction with tRNA" evidence="1">
    <location>
        <position position="129"/>
    </location>
</feature>
<feature type="site" description="Interaction with tRNA" evidence="1">
    <location>
        <position position="349"/>
    </location>
</feature>
<feature type="disulfide bond" description="Alternate" evidence="1">
    <location>
        <begin position="103"/>
        <end position="202"/>
    </location>
</feature>
<organism>
    <name type="scientific">Vibrio vulnificus (strain YJ016)</name>
    <dbReference type="NCBI Taxonomy" id="196600"/>
    <lineage>
        <taxon>Bacteria</taxon>
        <taxon>Pseudomonadati</taxon>
        <taxon>Pseudomonadota</taxon>
        <taxon>Gammaproteobacteria</taxon>
        <taxon>Vibrionales</taxon>
        <taxon>Vibrionaceae</taxon>
        <taxon>Vibrio</taxon>
    </lineage>
</organism>
<reference key="1">
    <citation type="journal article" date="2003" name="Genome Res.">
        <title>Comparative genome analysis of Vibrio vulnificus, a marine pathogen.</title>
        <authorList>
            <person name="Chen C.-Y."/>
            <person name="Wu K.-M."/>
            <person name="Chang Y.-C."/>
            <person name="Chang C.-H."/>
            <person name="Tsai H.-C."/>
            <person name="Liao T.-L."/>
            <person name="Liu Y.-M."/>
            <person name="Chen H.-J."/>
            <person name="Shen A.B.-T."/>
            <person name="Li J.-C."/>
            <person name="Su T.-L."/>
            <person name="Shao C.-P."/>
            <person name="Lee C.-T."/>
            <person name="Hor L.-I."/>
            <person name="Tsai S.-F."/>
        </authorList>
    </citation>
    <scope>NUCLEOTIDE SEQUENCE [LARGE SCALE GENOMIC DNA]</scope>
    <source>
        <strain>YJ016</strain>
    </source>
</reference>
<comment type="function">
    <text evidence="1">Catalyzes the 2-thiolation of uridine at the wobble position (U34) of tRNA, leading to the formation of s(2)U34.</text>
</comment>
<comment type="catalytic activity">
    <reaction evidence="1">
        <text>S-sulfanyl-L-cysteinyl-[protein] + uridine(34) in tRNA + AH2 + ATP = 2-thiouridine(34) in tRNA + L-cysteinyl-[protein] + A + AMP + diphosphate + H(+)</text>
        <dbReference type="Rhea" id="RHEA:47032"/>
        <dbReference type="Rhea" id="RHEA-COMP:10131"/>
        <dbReference type="Rhea" id="RHEA-COMP:11726"/>
        <dbReference type="Rhea" id="RHEA-COMP:11727"/>
        <dbReference type="Rhea" id="RHEA-COMP:11728"/>
        <dbReference type="ChEBI" id="CHEBI:13193"/>
        <dbReference type="ChEBI" id="CHEBI:15378"/>
        <dbReference type="ChEBI" id="CHEBI:17499"/>
        <dbReference type="ChEBI" id="CHEBI:29950"/>
        <dbReference type="ChEBI" id="CHEBI:30616"/>
        <dbReference type="ChEBI" id="CHEBI:33019"/>
        <dbReference type="ChEBI" id="CHEBI:61963"/>
        <dbReference type="ChEBI" id="CHEBI:65315"/>
        <dbReference type="ChEBI" id="CHEBI:87170"/>
        <dbReference type="ChEBI" id="CHEBI:456215"/>
        <dbReference type="EC" id="2.8.1.13"/>
    </reaction>
</comment>
<comment type="subcellular location">
    <subcellularLocation>
        <location evidence="1">Cytoplasm</location>
    </subcellularLocation>
</comment>
<comment type="similarity">
    <text evidence="1">Belongs to the MnmA/TRMU family.</text>
</comment>
<sequence>MSDNSQKKVIVGMSGGVDSSVSAYLLKQQGYQVEGLFMKNWEEDDDSEYCTAAEDLADAQAVCDKLGIHLHKINFAAEYWDNVFEYFLSEYKAGRTPNPDILCNKEIKFKAFLEFADEVLDADYIAMGHYVRRSFPENGEKPQMLRGLDGNKDQSYFLYTLSHEQVARSLFPVGELEKPEVRRIAEEQGLITAKKKDSTGICFIGERKFTDFLSRYLPAQPGNIESPEGEVLGQHQGLMYHTLGQRKGLHIGGRKGGGGNEEPWFVAEKDLKRNVLIAVQGQDHPMLKSEGLIASQLHWVEREPIRDVMKCTVKTRYRQQDIPCTIIPIDDENIKVIFDEPEIAVTPGQSAVFYQGDVCLGGGIIEKRIKYTQA</sequence>
<gene>
    <name evidence="1" type="primary">mnmA</name>
    <name type="synonym">trmU</name>
    <name type="ordered locus">VV1343</name>
</gene>
<dbReference type="EC" id="2.8.1.13" evidence="1"/>
<dbReference type="EMBL" id="BA000037">
    <property type="protein sequence ID" value="BAC94107.1"/>
    <property type="molecule type" value="Genomic_DNA"/>
</dbReference>
<dbReference type="RefSeq" id="WP_011150016.1">
    <property type="nucleotide sequence ID" value="NC_005139.1"/>
</dbReference>
<dbReference type="SMR" id="Q7MLT4"/>
<dbReference type="STRING" id="672.VV93_v1c12570"/>
<dbReference type="KEGG" id="vvy:VV1343"/>
<dbReference type="PATRIC" id="fig|196600.6.peg.1333"/>
<dbReference type="eggNOG" id="COG0482">
    <property type="taxonomic scope" value="Bacteria"/>
</dbReference>
<dbReference type="HOGENOM" id="CLU_035188_1_0_6"/>
<dbReference type="Proteomes" id="UP000002675">
    <property type="component" value="Chromosome I"/>
</dbReference>
<dbReference type="GO" id="GO:0005737">
    <property type="term" value="C:cytoplasm"/>
    <property type="evidence" value="ECO:0007669"/>
    <property type="project" value="UniProtKB-SubCell"/>
</dbReference>
<dbReference type="GO" id="GO:0005524">
    <property type="term" value="F:ATP binding"/>
    <property type="evidence" value="ECO:0007669"/>
    <property type="project" value="UniProtKB-KW"/>
</dbReference>
<dbReference type="GO" id="GO:0000049">
    <property type="term" value="F:tRNA binding"/>
    <property type="evidence" value="ECO:0007669"/>
    <property type="project" value="UniProtKB-KW"/>
</dbReference>
<dbReference type="GO" id="GO:0103016">
    <property type="term" value="F:tRNA-uridine 2-sulfurtransferase activity"/>
    <property type="evidence" value="ECO:0007669"/>
    <property type="project" value="UniProtKB-EC"/>
</dbReference>
<dbReference type="GO" id="GO:0002143">
    <property type="term" value="P:tRNA wobble position uridine thiolation"/>
    <property type="evidence" value="ECO:0007669"/>
    <property type="project" value="TreeGrafter"/>
</dbReference>
<dbReference type="CDD" id="cd01998">
    <property type="entry name" value="MnmA_TRMU-like"/>
    <property type="match status" value="1"/>
</dbReference>
<dbReference type="FunFam" id="2.30.30.280:FF:000001">
    <property type="entry name" value="tRNA-specific 2-thiouridylase MnmA"/>
    <property type="match status" value="1"/>
</dbReference>
<dbReference type="FunFam" id="2.40.30.10:FF:000023">
    <property type="entry name" value="tRNA-specific 2-thiouridylase MnmA"/>
    <property type="match status" value="1"/>
</dbReference>
<dbReference type="FunFam" id="3.40.50.620:FF:000004">
    <property type="entry name" value="tRNA-specific 2-thiouridylase MnmA"/>
    <property type="match status" value="1"/>
</dbReference>
<dbReference type="Gene3D" id="2.30.30.280">
    <property type="entry name" value="Adenine nucleotide alpha hydrolases-like domains"/>
    <property type="match status" value="1"/>
</dbReference>
<dbReference type="Gene3D" id="3.40.50.620">
    <property type="entry name" value="HUPs"/>
    <property type="match status" value="1"/>
</dbReference>
<dbReference type="Gene3D" id="2.40.30.10">
    <property type="entry name" value="Translation factors"/>
    <property type="match status" value="1"/>
</dbReference>
<dbReference type="HAMAP" id="MF_00144">
    <property type="entry name" value="tRNA_thiouridyl_MnmA"/>
    <property type="match status" value="1"/>
</dbReference>
<dbReference type="InterPro" id="IPR004506">
    <property type="entry name" value="MnmA-like"/>
</dbReference>
<dbReference type="InterPro" id="IPR046885">
    <property type="entry name" value="MnmA-like_C"/>
</dbReference>
<dbReference type="InterPro" id="IPR046884">
    <property type="entry name" value="MnmA-like_central"/>
</dbReference>
<dbReference type="InterPro" id="IPR023382">
    <property type="entry name" value="MnmA-like_central_sf"/>
</dbReference>
<dbReference type="InterPro" id="IPR014729">
    <property type="entry name" value="Rossmann-like_a/b/a_fold"/>
</dbReference>
<dbReference type="NCBIfam" id="NF001138">
    <property type="entry name" value="PRK00143.1"/>
    <property type="match status" value="1"/>
</dbReference>
<dbReference type="NCBIfam" id="TIGR00420">
    <property type="entry name" value="trmU"/>
    <property type="match status" value="1"/>
</dbReference>
<dbReference type="PANTHER" id="PTHR11933:SF5">
    <property type="entry name" value="MITOCHONDRIAL TRNA-SPECIFIC 2-THIOURIDYLASE 1"/>
    <property type="match status" value="1"/>
</dbReference>
<dbReference type="PANTHER" id="PTHR11933">
    <property type="entry name" value="TRNA 5-METHYLAMINOMETHYL-2-THIOURIDYLATE -METHYLTRANSFERASE"/>
    <property type="match status" value="1"/>
</dbReference>
<dbReference type="Pfam" id="PF03054">
    <property type="entry name" value="tRNA_Me_trans"/>
    <property type="match status" value="1"/>
</dbReference>
<dbReference type="Pfam" id="PF20258">
    <property type="entry name" value="tRNA_Me_trans_C"/>
    <property type="match status" value="1"/>
</dbReference>
<dbReference type="Pfam" id="PF20259">
    <property type="entry name" value="tRNA_Me_trans_M"/>
    <property type="match status" value="1"/>
</dbReference>
<dbReference type="SUPFAM" id="SSF52402">
    <property type="entry name" value="Adenine nucleotide alpha hydrolases-like"/>
    <property type="match status" value="1"/>
</dbReference>
<proteinExistence type="inferred from homology"/>
<keyword id="KW-0067">ATP-binding</keyword>
<keyword id="KW-0963">Cytoplasm</keyword>
<keyword id="KW-1015">Disulfide bond</keyword>
<keyword id="KW-0547">Nucleotide-binding</keyword>
<keyword id="KW-0694">RNA-binding</keyword>
<keyword id="KW-0808">Transferase</keyword>
<keyword id="KW-0819">tRNA processing</keyword>
<keyword id="KW-0820">tRNA-binding</keyword>
<evidence type="ECO:0000255" key="1">
    <source>
        <dbReference type="HAMAP-Rule" id="MF_00144"/>
    </source>
</evidence>
<accession>Q7MLT4</accession>